<sequence>MSVQSSSGSLEGPPSWSRLSTSPTPGSAAAARSLLNHTPPSGRPREGAMDELHSLDPRRQELLEARFTGVATGSTGSTGSCSVGAKASTNNESSNHSFGSLGSLSDKESETPEKKQSESSRGRKRKAESQNESSQGKSIGGRGHKISDYFEYQGGNGSSPVRGIPPAIRSPQNSHSHSTPSSSVRPNSPSPTALAFGDHPVVQPKQLSFKITQTDLTMLKLAALESTKNQDLEKKEGRIDDLLRANCDLRRQIDDQQKLLEKYKERLNKCISMSKKLLIEKSTQEKLSSREKSMQDRLRLGHFTTVRHGASFTEQWTDGFAFQNLVKQQEWVNQQREDIERQRKLLGKRKPPTANNSQAPATNSEAKQRKTKAVNGAENDPFVRPNLPQLLTLAEYHEQEEIFKLRLGHLKKEEAEIQAELERLERVRNLHIRELKRINNEDNSQFKDHPTLNERYLLLHLLGRGGFSEVYKAFDLYEQRYAAVKIHQLNKSWRDEKKENYHKHACREYRIHKELDHPRIVKLYDYFSLDTDTFCTVLEYCEGNDLDFYLKQHKLMSEKEARSIVMQIVNALRYLNEIKPPIIHYDLKPGNILLVDGTACGEIKITDFGLSKIMDDDSYGVDGMDLTSQGAGTYWYLPPECFVVGKEPPKISNKVDVWSVGVIFFQCLYGRKPFGHNQSQQDILQENTILKATEVQFPVKPVVSSEAKAFIRRCLAYRKEDRFDVHQLANDPYLLPHMRRSNSSGNLHMSGLTATPTPPSSSIITY</sequence>
<reference evidence="11" key="1">
    <citation type="journal article" date="2004" name="Genome Res.">
        <title>The status, quality, and expansion of the NIH full-length cDNA project: the Mammalian Gene Collection (MGC).</title>
        <authorList>
            <consortium name="The MGC Project Team"/>
        </authorList>
    </citation>
    <scope>NUCLEOTIDE SEQUENCE [LARGE SCALE MRNA]</scope>
    <source>
        <tissue evidence="11">Limb</tissue>
    </source>
</reference>
<reference key="2">
    <citation type="journal article" date="2005" name="Science">
        <title>The transcriptional landscape of the mammalian genome.</title>
        <authorList>
            <person name="Carninci P."/>
            <person name="Kasukawa T."/>
            <person name="Katayama S."/>
            <person name="Gough J."/>
            <person name="Frith M.C."/>
            <person name="Maeda N."/>
            <person name="Oyama R."/>
            <person name="Ravasi T."/>
            <person name="Lenhard B."/>
            <person name="Wells C."/>
            <person name="Kodzius R."/>
            <person name="Shimokawa K."/>
            <person name="Bajic V.B."/>
            <person name="Brenner S.E."/>
            <person name="Batalov S."/>
            <person name="Forrest A.R."/>
            <person name="Zavolan M."/>
            <person name="Davis M.J."/>
            <person name="Wilming L.G."/>
            <person name="Aidinis V."/>
            <person name="Allen J.E."/>
            <person name="Ambesi-Impiombato A."/>
            <person name="Apweiler R."/>
            <person name="Aturaliya R.N."/>
            <person name="Bailey T.L."/>
            <person name="Bansal M."/>
            <person name="Baxter L."/>
            <person name="Beisel K.W."/>
            <person name="Bersano T."/>
            <person name="Bono H."/>
            <person name="Chalk A.M."/>
            <person name="Chiu K.P."/>
            <person name="Choudhary V."/>
            <person name="Christoffels A."/>
            <person name="Clutterbuck D.R."/>
            <person name="Crowe M.L."/>
            <person name="Dalla E."/>
            <person name="Dalrymple B.P."/>
            <person name="de Bono B."/>
            <person name="Della Gatta G."/>
            <person name="di Bernardo D."/>
            <person name="Down T."/>
            <person name="Engstrom P."/>
            <person name="Fagiolini M."/>
            <person name="Faulkner G."/>
            <person name="Fletcher C.F."/>
            <person name="Fukushima T."/>
            <person name="Furuno M."/>
            <person name="Futaki S."/>
            <person name="Gariboldi M."/>
            <person name="Georgii-Hemming P."/>
            <person name="Gingeras T.R."/>
            <person name="Gojobori T."/>
            <person name="Green R.E."/>
            <person name="Gustincich S."/>
            <person name="Harbers M."/>
            <person name="Hayashi Y."/>
            <person name="Hensch T.K."/>
            <person name="Hirokawa N."/>
            <person name="Hill D."/>
            <person name="Huminiecki L."/>
            <person name="Iacono M."/>
            <person name="Ikeo K."/>
            <person name="Iwama A."/>
            <person name="Ishikawa T."/>
            <person name="Jakt M."/>
            <person name="Kanapin A."/>
            <person name="Katoh M."/>
            <person name="Kawasawa Y."/>
            <person name="Kelso J."/>
            <person name="Kitamura H."/>
            <person name="Kitano H."/>
            <person name="Kollias G."/>
            <person name="Krishnan S.P."/>
            <person name="Kruger A."/>
            <person name="Kummerfeld S.K."/>
            <person name="Kurochkin I.V."/>
            <person name="Lareau L.F."/>
            <person name="Lazarevic D."/>
            <person name="Lipovich L."/>
            <person name="Liu J."/>
            <person name="Liuni S."/>
            <person name="McWilliam S."/>
            <person name="Madan Babu M."/>
            <person name="Madera M."/>
            <person name="Marchionni L."/>
            <person name="Matsuda H."/>
            <person name="Matsuzawa S."/>
            <person name="Miki H."/>
            <person name="Mignone F."/>
            <person name="Miyake S."/>
            <person name="Morris K."/>
            <person name="Mottagui-Tabar S."/>
            <person name="Mulder N."/>
            <person name="Nakano N."/>
            <person name="Nakauchi H."/>
            <person name="Ng P."/>
            <person name="Nilsson R."/>
            <person name="Nishiguchi S."/>
            <person name="Nishikawa S."/>
            <person name="Nori F."/>
            <person name="Ohara O."/>
            <person name="Okazaki Y."/>
            <person name="Orlando V."/>
            <person name="Pang K.C."/>
            <person name="Pavan W.J."/>
            <person name="Pavesi G."/>
            <person name="Pesole G."/>
            <person name="Petrovsky N."/>
            <person name="Piazza S."/>
            <person name="Reed J."/>
            <person name="Reid J.F."/>
            <person name="Ring B.Z."/>
            <person name="Ringwald M."/>
            <person name="Rost B."/>
            <person name="Ruan Y."/>
            <person name="Salzberg S.L."/>
            <person name="Sandelin A."/>
            <person name="Schneider C."/>
            <person name="Schoenbach C."/>
            <person name="Sekiguchi K."/>
            <person name="Semple C.A."/>
            <person name="Seno S."/>
            <person name="Sessa L."/>
            <person name="Sheng Y."/>
            <person name="Shibata Y."/>
            <person name="Shimada H."/>
            <person name="Shimada K."/>
            <person name="Silva D."/>
            <person name="Sinclair B."/>
            <person name="Sperling S."/>
            <person name="Stupka E."/>
            <person name="Sugiura K."/>
            <person name="Sultana R."/>
            <person name="Takenaka Y."/>
            <person name="Taki K."/>
            <person name="Tammoja K."/>
            <person name="Tan S.L."/>
            <person name="Tang S."/>
            <person name="Taylor M.S."/>
            <person name="Tegner J."/>
            <person name="Teichmann S.A."/>
            <person name="Ueda H.R."/>
            <person name="van Nimwegen E."/>
            <person name="Verardo R."/>
            <person name="Wei C.L."/>
            <person name="Yagi K."/>
            <person name="Yamanishi H."/>
            <person name="Zabarovsky E."/>
            <person name="Zhu S."/>
            <person name="Zimmer A."/>
            <person name="Hide W."/>
            <person name="Bult C."/>
            <person name="Grimmond S.M."/>
            <person name="Teasdale R.D."/>
            <person name="Liu E.T."/>
            <person name="Brusic V."/>
            <person name="Quackenbush J."/>
            <person name="Wahlestedt C."/>
            <person name="Mattick J.S."/>
            <person name="Hume D.A."/>
            <person name="Kai C."/>
            <person name="Sasaki D."/>
            <person name="Tomaru Y."/>
            <person name="Fukuda S."/>
            <person name="Kanamori-Katayama M."/>
            <person name="Suzuki M."/>
            <person name="Aoki J."/>
            <person name="Arakawa T."/>
            <person name="Iida J."/>
            <person name="Imamura K."/>
            <person name="Itoh M."/>
            <person name="Kato T."/>
            <person name="Kawaji H."/>
            <person name="Kawagashira N."/>
            <person name="Kawashima T."/>
            <person name="Kojima M."/>
            <person name="Kondo S."/>
            <person name="Konno H."/>
            <person name="Nakano K."/>
            <person name="Ninomiya N."/>
            <person name="Nishio T."/>
            <person name="Okada M."/>
            <person name="Plessy C."/>
            <person name="Shibata K."/>
            <person name="Shiraki T."/>
            <person name="Suzuki S."/>
            <person name="Tagami M."/>
            <person name="Waki K."/>
            <person name="Watahiki A."/>
            <person name="Okamura-Oho Y."/>
            <person name="Suzuki H."/>
            <person name="Kawai J."/>
            <person name="Hayashizaki Y."/>
        </authorList>
    </citation>
    <scope>NUCLEOTIDE SEQUENCE [LARGE SCALE MRNA] OF 43-766</scope>
    <source>
        <strain>C57BL/6J</strain>
        <tissue>Testis</tissue>
    </source>
</reference>
<reference evidence="10" key="3">
    <citation type="journal article" date="1999" name="EMBO J.">
        <title>Mammalian homologues of the plant tousled gene code for cell-cycle-regulated kinases with maximal activities linked to ongoing DNA replication.</title>
        <authorList>
            <person name="Sillje H.H.W."/>
            <person name="Takahashi K."/>
            <person name="Tanaka K."/>
            <person name="Van Houwe G."/>
            <person name="Nigg E.A."/>
        </authorList>
    </citation>
    <scope>TISSUE SPECIFICITY</scope>
</reference>
<reference key="4">
    <citation type="journal article" date="2005" name="BMC Mol. Biol.">
        <title>The radioresistance kinase TLK1B protects the cells by promoting repair of double strand breaks.</title>
        <authorList>
            <person name="Sunavala-Dossabhoy G."/>
            <person name="Balakrishnan S.K."/>
            <person name="Sen S."/>
            <person name="Nuthalapaty S."/>
            <person name="De Benedetti A."/>
        </authorList>
    </citation>
    <scope>FUNCTION</scope>
</reference>
<reference key="5">
    <citation type="journal article" date="2010" name="Cell">
        <title>A tissue-specific atlas of mouse protein phosphorylation and expression.</title>
        <authorList>
            <person name="Huttlin E.L."/>
            <person name="Jedrychowski M.P."/>
            <person name="Elias J.E."/>
            <person name="Goswami T."/>
            <person name="Rad R."/>
            <person name="Beausoleil S.A."/>
            <person name="Villen J."/>
            <person name="Haas W."/>
            <person name="Sowa M.E."/>
            <person name="Gygi S.P."/>
        </authorList>
    </citation>
    <scope>PHOSPHORYLATION [LARGE SCALE ANALYSIS] AT SER-80 AND SER-159</scope>
    <scope>IDENTIFICATION BY MASS SPECTROMETRY [LARGE SCALE ANALYSIS]</scope>
    <source>
        <tissue>Brain</tissue>
        <tissue>Brown adipose tissue</tissue>
        <tissue>Kidney</tissue>
        <tissue>Pancreas</tissue>
        <tissue>Spleen</tissue>
        <tissue>Testis</tissue>
    </source>
</reference>
<keyword id="KW-0067">ATP-binding</keyword>
<keyword id="KW-0131">Cell cycle</keyword>
<keyword id="KW-0156">Chromatin regulator</keyword>
<keyword id="KW-0175">Coiled coil</keyword>
<keyword id="KW-0227">DNA damage</keyword>
<keyword id="KW-0418">Kinase</keyword>
<keyword id="KW-0547">Nucleotide-binding</keyword>
<keyword id="KW-0539">Nucleus</keyword>
<keyword id="KW-0597">Phosphoprotein</keyword>
<keyword id="KW-1185">Reference proteome</keyword>
<keyword id="KW-0723">Serine/threonine-protein kinase</keyword>
<keyword id="KW-0808">Transferase</keyword>
<proteinExistence type="evidence at protein level"/>
<feature type="chain" id="PRO_0000086753" description="Serine/threonine-protein kinase tousled-like 1">
    <location>
        <begin position="1"/>
        <end position="766"/>
    </location>
</feature>
<feature type="domain" description="Protein kinase" evidence="5">
    <location>
        <begin position="456"/>
        <end position="734"/>
    </location>
</feature>
<feature type="region of interest" description="Disordered" evidence="7">
    <location>
        <begin position="1"/>
        <end position="198"/>
    </location>
</feature>
<feature type="region of interest" description="Disordered" evidence="7">
    <location>
        <begin position="344"/>
        <end position="381"/>
    </location>
</feature>
<feature type="region of interest" description="Disordered" evidence="7">
    <location>
        <begin position="745"/>
        <end position="766"/>
    </location>
</feature>
<feature type="coiled-coil region" evidence="4">
    <location>
        <begin position="229"/>
        <end position="280"/>
    </location>
</feature>
<feature type="coiled-coil region" evidence="4">
    <location>
        <begin position="397"/>
        <end position="445"/>
    </location>
</feature>
<feature type="compositionally biased region" description="Low complexity" evidence="7">
    <location>
        <begin position="20"/>
        <end position="33"/>
    </location>
</feature>
<feature type="compositionally biased region" description="Basic and acidic residues" evidence="7">
    <location>
        <begin position="43"/>
        <end position="64"/>
    </location>
</feature>
<feature type="compositionally biased region" description="Low complexity" evidence="7">
    <location>
        <begin position="68"/>
        <end position="85"/>
    </location>
</feature>
<feature type="compositionally biased region" description="Polar residues" evidence="7">
    <location>
        <begin position="87"/>
        <end position="103"/>
    </location>
</feature>
<feature type="compositionally biased region" description="Basic and acidic residues" evidence="7">
    <location>
        <begin position="105"/>
        <end position="121"/>
    </location>
</feature>
<feature type="compositionally biased region" description="Low complexity" evidence="7">
    <location>
        <begin position="170"/>
        <end position="192"/>
    </location>
</feature>
<feature type="compositionally biased region" description="Polar residues" evidence="7">
    <location>
        <begin position="353"/>
        <end position="365"/>
    </location>
</feature>
<feature type="active site" description="Proton acceptor" evidence="5 6">
    <location>
        <position position="586"/>
    </location>
</feature>
<feature type="binding site" evidence="5">
    <location>
        <begin position="462"/>
        <end position="470"/>
    </location>
    <ligand>
        <name>ATP</name>
        <dbReference type="ChEBI" id="CHEBI:30616"/>
    </ligand>
</feature>
<feature type="binding site" evidence="5">
    <location>
        <position position="485"/>
    </location>
    <ligand>
        <name>ATP</name>
        <dbReference type="ChEBI" id="CHEBI:30616"/>
    </ligand>
</feature>
<feature type="modified residue" description="Phosphothreonine" evidence="3">
    <location>
        <position position="38"/>
    </location>
</feature>
<feature type="modified residue" description="Phosphoserine" evidence="3">
    <location>
        <position position="54"/>
    </location>
</feature>
<feature type="modified residue" description="Phosphoserine" evidence="3">
    <location>
        <position position="77"/>
    </location>
</feature>
<feature type="modified residue" description="Phosphoserine" evidence="13">
    <location>
        <position position="80"/>
    </location>
</feature>
<feature type="modified residue" description="Phosphoserine" evidence="2">
    <location>
        <position position="134"/>
    </location>
</feature>
<feature type="modified residue" description="Phosphoserine" evidence="13">
    <location>
        <position position="159"/>
    </location>
</feature>
<feature type="modified residue" description="Phosphoserine" evidence="2">
    <location>
        <position position="174"/>
    </location>
</feature>
<feature type="modified residue" description="Phosphoserine" evidence="2">
    <location>
        <position position="176"/>
    </location>
</feature>
<feature type="modified residue" description="Phosphoserine" evidence="2">
    <location>
        <position position="743"/>
    </location>
</feature>
<evidence type="ECO:0000250" key="1"/>
<evidence type="ECO:0000250" key="2">
    <source>
        <dbReference type="UniProtKB" id="Q86UE8"/>
    </source>
</evidence>
<evidence type="ECO:0000250" key="3">
    <source>
        <dbReference type="UniProtKB" id="Q9UKI8"/>
    </source>
</evidence>
<evidence type="ECO:0000255" key="4"/>
<evidence type="ECO:0000255" key="5">
    <source>
        <dbReference type="PROSITE-ProRule" id="PRU00159"/>
    </source>
</evidence>
<evidence type="ECO:0000255" key="6">
    <source>
        <dbReference type="PROSITE-ProRule" id="PRU10027"/>
    </source>
</evidence>
<evidence type="ECO:0000256" key="7">
    <source>
        <dbReference type="SAM" id="MobiDB-lite"/>
    </source>
</evidence>
<evidence type="ECO:0000269" key="8">
    <source>
    </source>
</evidence>
<evidence type="ECO:0000269" key="9">
    <source>
    </source>
</evidence>
<evidence type="ECO:0000305" key="10"/>
<evidence type="ECO:0000312" key="11">
    <source>
        <dbReference type="EMBL" id="AAH51641.1"/>
    </source>
</evidence>
<evidence type="ECO:0000312" key="12">
    <source>
        <dbReference type="EMBL" id="BAC26610.1"/>
    </source>
</evidence>
<evidence type="ECO:0007744" key="13">
    <source>
    </source>
</evidence>
<name>TLK1_MOUSE</name>
<organism evidence="12">
    <name type="scientific">Mus musculus</name>
    <name type="common">Mouse</name>
    <dbReference type="NCBI Taxonomy" id="10090"/>
    <lineage>
        <taxon>Eukaryota</taxon>
        <taxon>Metazoa</taxon>
        <taxon>Chordata</taxon>
        <taxon>Craniata</taxon>
        <taxon>Vertebrata</taxon>
        <taxon>Euteleostomi</taxon>
        <taxon>Mammalia</taxon>
        <taxon>Eutheria</taxon>
        <taxon>Euarchontoglires</taxon>
        <taxon>Glires</taxon>
        <taxon>Rodentia</taxon>
        <taxon>Myomorpha</taxon>
        <taxon>Muroidea</taxon>
        <taxon>Muridae</taxon>
        <taxon>Murinae</taxon>
        <taxon>Mus</taxon>
        <taxon>Mus</taxon>
    </lineage>
</organism>
<comment type="function">
    <text evidence="1 9">Rapidly and transiently inhibited by phosphorylation following the generation of DNA double-stranded breaks during S-phase. This is cell cycle checkpoint and ATM-pathway dependent and appears to regulate processes involved in chromatin assembly (By similarity). Isoform 3 protects the cells from the ionizing radiation by facilitating the repair of DSBs. In vitro, phosphorylates histone H3 at 'Ser-10' (By similarity).</text>
</comment>
<comment type="catalytic activity">
    <reaction evidence="3">
        <text>L-seryl-[protein] + ATP = O-phospho-L-seryl-[protein] + ADP + H(+)</text>
        <dbReference type="Rhea" id="RHEA:17989"/>
        <dbReference type="Rhea" id="RHEA-COMP:9863"/>
        <dbReference type="Rhea" id="RHEA-COMP:11604"/>
        <dbReference type="ChEBI" id="CHEBI:15378"/>
        <dbReference type="ChEBI" id="CHEBI:29999"/>
        <dbReference type="ChEBI" id="CHEBI:30616"/>
        <dbReference type="ChEBI" id="CHEBI:83421"/>
        <dbReference type="ChEBI" id="CHEBI:456216"/>
        <dbReference type="EC" id="2.7.11.1"/>
    </reaction>
</comment>
<comment type="catalytic activity">
    <reaction evidence="3">
        <text>L-threonyl-[protein] + ATP = O-phospho-L-threonyl-[protein] + ADP + H(+)</text>
        <dbReference type="Rhea" id="RHEA:46608"/>
        <dbReference type="Rhea" id="RHEA-COMP:11060"/>
        <dbReference type="Rhea" id="RHEA-COMP:11605"/>
        <dbReference type="ChEBI" id="CHEBI:15378"/>
        <dbReference type="ChEBI" id="CHEBI:30013"/>
        <dbReference type="ChEBI" id="CHEBI:30616"/>
        <dbReference type="ChEBI" id="CHEBI:61977"/>
        <dbReference type="ChEBI" id="CHEBI:456216"/>
        <dbReference type="EC" id="2.7.11.1"/>
    </reaction>
</comment>
<comment type="cofactor">
    <cofactor evidence="3">
        <name>Mg(2+)</name>
        <dbReference type="ChEBI" id="CHEBI:18420"/>
    </cofactor>
</comment>
<comment type="activity regulation">
    <text evidence="1">Cell-cycle regulated, maximal activity in S-phase. Inactivated by phosphorylation at Ser-743, potentially by CHEK1 (By similarity).</text>
</comment>
<comment type="subunit">
    <text evidence="3">Heterodimer with TLK2.</text>
</comment>
<comment type="subcellular location">
    <subcellularLocation>
        <location evidence="1">Nucleus</location>
    </subcellularLocation>
</comment>
<comment type="tissue specificity">
    <text evidence="8">Ubiquitously expressed in all tissues examined.</text>
</comment>
<comment type="similarity">
    <text evidence="5">Belongs to the protein kinase superfamily. Ser/Thr protein kinase family.</text>
</comment>
<comment type="sequence caution" evidence="10">
    <conflict type="erroneous initiation">
        <sequence resource="EMBL-CDS" id="AAH51641"/>
    </conflict>
</comment>
<accession>Q8C0V0</accession>
<gene>
    <name type="primary">Tlk1</name>
</gene>
<protein>
    <recommendedName>
        <fullName>Serine/threonine-protein kinase tousled-like 1</fullName>
        <ecNumber>2.7.11.1</ecNumber>
    </recommendedName>
    <alternativeName>
        <fullName>Tousled-like kinase 1</fullName>
    </alternativeName>
</protein>
<dbReference type="EC" id="2.7.11.1"/>
<dbReference type="EMBL" id="BC051641">
    <property type="protein sequence ID" value="AAH51641.1"/>
    <property type="status" value="ALT_INIT"/>
    <property type="molecule type" value="mRNA"/>
</dbReference>
<dbReference type="EMBL" id="AK029773">
    <property type="protein sequence ID" value="BAC26610.1"/>
    <property type="status" value="ALT_SEQ"/>
    <property type="molecule type" value="mRNA"/>
</dbReference>
<dbReference type="CCDS" id="CCDS50599.1"/>
<dbReference type="RefSeq" id="NP_766252.2">
    <property type="nucleotide sequence ID" value="NM_172664.3"/>
</dbReference>
<dbReference type="RefSeq" id="XP_006499253.1">
    <property type="nucleotide sequence ID" value="XM_006499190.3"/>
</dbReference>
<dbReference type="SMR" id="Q8C0V0"/>
<dbReference type="BioGRID" id="230704">
    <property type="interactions" value="1"/>
</dbReference>
<dbReference type="FunCoup" id="Q8C0V0">
    <property type="interactions" value="5201"/>
</dbReference>
<dbReference type="STRING" id="10090.ENSMUSP00000035961"/>
<dbReference type="GlyGen" id="Q8C0V0">
    <property type="glycosylation" value="4 sites, 1 N-linked glycan (1 site), 1 O-linked glycan (1 site)"/>
</dbReference>
<dbReference type="iPTMnet" id="Q8C0V0"/>
<dbReference type="PhosphoSitePlus" id="Q8C0V0"/>
<dbReference type="jPOST" id="Q8C0V0"/>
<dbReference type="PaxDb" id="10090-ENSMUSP00000035961"/>
<dbReference type="PeptideAtlas" id="Q8C0V0"/>
<dbReference type="ProteomicsDB" id="259200"/>
<dbReference type="Pumba" id="Q8C0V0"/>
<dbReference type="Antibodypedia" id="19345">
    <property type="antibodies" value="389 antibodies from 36 providers"/>
</dbReference>
<dbReference type="DNASU" id="228012"/>
<dbReference type="Ensembl" id="ENSMUST00000038584.9">
    <property type="protein sequence ID" value="ENSMUSP00000035961.9"/>
    <property type="gene ID" value="ENSMUSG00000041997.17"/>
</dbReference>
<dbReference type="GeneID" id="228012"/>
<dbReference type="KEGG" id="mmu:228012"/>
<dbReference type="UCSC" id="uc008jzt.1">
    <property type="organism name" value="mouse"/>
</dbReference>
<dbReference type="AGR" id="MGI:2441683"/>
<dbReference type="CTD" id="9874"/>
<dbReference type="MGI" id="MGI:2441683">
    <property type="gene designation" value="Tlk1"/>
</dbReference>
<dbReference type="VEuPathDB" id="HostDB:ENSMUSG00000041997"/>
<dbReference type="eggNOG" id="KOG1151">
    <property type="taxonomic scope" value="Eukaryota"/>
</dbReference>
<dbReference type="GeneTree" id="ENSGT00950000182984"/>
<dbReference type="HOGENOM" id="CLU_000288_85_1_1"/>
<dbReference type="InParanoid" id="Q8C0V0"/>
<dbReference type="OMA" id="YKHACRE"/>
<dbReference type="OrthoDB" id="346907at2759"/>
<dbReference type="PhylomeDB" id="Q8C0V0"/>
<dbReference type="TreeFam" id="TF315233"/>
<dbReference type="BioGRID-ORCS" id="228012">
    <property type="hits" value="3 hits in 83 CRISPR screens"/>
</dbReference>
<dbReference type="ChiTaRS" id="Tlk1">
    <property type="organism name" value="mouse"/>
</dbReference>
<dbReference type="PRO" id="PR:Q8C0V0"/>
<dbReference type="Proteomes" id="UP000000589">
    <property type="component" value="Chromosome 2"/>
</dbReference>
<dbReference type="RNAct" id="Q8C0V0">
    <property type="molecule type" value="protein"/>
</dbReference>
<dbReference type="Bgee" id="ENSMUSG00000041997">
    <property type="expression patterns" value="Expressed in manus and 231 other cell types or tissues"/>
</dbReference>
<dbReference type="GO" id="GO:0005654">
    <property type="term" value="C:nucleoplasm"/>
    <property type="evidence" value="ECO:0007669"/>
    <property type="project" value="Ensembl"/>
</dbReference>
<dbReference type="GO" id="GO:0005634">
    <property type="term" value="C:nucleus"/>
    <property type="evidence" value="ECO:0000250"/>
    <property type="project" value="UniProtKB"/>
</dbReference>
<dbReference type="GO" id="GO:0005524">
    <property type="term" value="F:ATP binding"/>
    <property type="evidence" value="ECO:0000250"/>
    <property type="project" value="UniProtKB"/>
</dbReference>
<dbReference type="GO" id="GO:0106310">
    <property type="term" value="F:protein serine kinase activity"/>
    <property type="evidence" value="ECO:0007669"/>
    <property type="project" value="RHEA"/>
</dbReference>
<dbReference type="GO" id="GO:0004674">
    <property type="term" value="F:protein serine/threonine kinase activity"/>
    <property type="evidence" value="ECO:0000250"/>
    <property type="project" value="UniProtKB"/>
</dbReference>
<dbReference type="GO" id="GO:0006325">
    <property type="term" value="P:chromatin organization"/>
    <property type="evidence" value="ECO:0007669"/>
    <property type="project" value="UniProtKB-KW"/>
</dbReference>
<dbReference type="GO" id="GO:0006974">
    <property type="term" value="P:DNA damage response"/>
    <property type="evidence" value="ECO:0007669"/>
    <property type="project" value="UniProtKB-KW"/>
</dbReference>
<dbReference type="GO" id="GO:0006886">
    <property type="term" value="P:intracellular protein transport"/>
    <property type="evidence" value="ECO:0007669"/>
    <property type="project" value="Ensembl"/>
</dbReference>
<dbReference type="GO" id="GO:0035556">
    <property type="term" value="P:intracellular signal transduction"/>
    <property type="evidence" value="ECO:0000250"/>
    <property type="project" value="UniProtKB"/>
</dbReference>
<dbReference type="GO" id="GO:0006468">
    <property type="term" value="P:protein phosphorylation"/>
    <property type="evidence" value="ECO:0000250"/>
    <property type="project" value="UniProtKB"/>
</dbReference>
<dbReference type="GO" id="GO:1902275">
    <property type="term" value="P:regulation of chromatin organization"/>
    <property type="evidence" value="ECO:0000250"/>
    <property type="project" value="UniProtKB"/>
</dbReference>
<dbReference type="CDD" id="cd14040">
    <property type="entry name" value="STKc_TLK1"/>
    <property type="match status" value="1"/>
</dbReference>
<dbReference type="FunFam" id="1.10.510.10:FF:000037">
    <property type="entry name" value="Serine/threonine-protein kinase tousled-like 2"/>
    <property type="match status" value="1"/>
</dbReference>
<dbReference type="Gene3D" id="1.10.510.10">
    <property type="entry name" value="Transferase(Phosphotransferase) domain 1"/>
    <property type="match status" value="1"/>
</dbReference>
<dbReference type="InterPro" id="IPR011009">
    <property type="entry name" value="Kinase-like_dom_sf"/>
</dbReference>
<dbReference type="InterPro" id="IPR000719">
    <property type="entry name" value="Prot_kinase_dom"/>
</dbReference>
<dbReference type="InterPro" id="IPR017441">
    <property type="entry name" value="Protein_kinase_ATP_BS"/>
</dbReference>
<dbReference type="InterPro" id="IPR008271">
    <property type="entry name" value="Ser/Thr_kinase_AS"/>
</dbReference>
<dbReference type="PANTHER" id="PTHR22974">
    <property type="entry name" value="MIXED LINEAGE PROTEIN KINASE"/>
    <property type="match status" value="1"/>
</dbReference>
<dbReference type="PANTHER" id="PTHR22974:SF22">
    <property type="entry name" value="SERINE_THREONINE-PROTEIN KINASE TOUSLED-LIKE 1"/>
    <property type="match status" value="1"/>
</dbReference>
<dbReference type="Pfam" id="PF00069">
    <property type="entry name" value="Pkinase"/>
    <property type="match status" value="1"/>
</dbReference>
<dbReference type="SMART" id="SM00220">
    <property type="entry name" value="S_TKc"/>
    <property type="match status" value="1"/>
</dbReference>
<dbReference type="SUPFAM" id="SSF56112">
    <property type="entry name" value="Protein kinase-like (PK-like)"/>
    <property type="match status" value="1"/>
</dbReference>
<dbReference type="PROSITE" id="PS00107">
    <property type="entry name" value="PROTEIN_KINASE_ATP"/>
    <property type="match status" value="1"/>
</dbReference>
<dbReference type="PROSITE" id="PS50011">
    <property type="entry name" value="PROTEIN_KINASE_DOM"/>
    <property type="match status" value="1"/>
</dbReference>
<dbReference type="PROSITE" id="PS00108">
    <property type="entry name" value="PROTEIN_KINASE_ST"/>
    <property type="match status" value="1"/>
</dbReference>